<organism>
    <name type="scientific">Shewanella baltica (strain OS223)</name>
    <dbReference type="NCBI Taxonomy" id="407976"/>
    <lineage>
        <taxon>Bacteria</taxon>
        <taxon>Pseudomonadati</taxon>
        <taxon>Pseudomonadota</taxon>
        <taxon>Gammaproteobacteria</taxon>
        <taxon>Alteromonadales</taxon>
        <taxon>Shewanellaceae</taxon>
        <taxon>Shewanella</taxon>
    </lineage>
</organism>
<sequence>MPRVKRGVTARARHKKVLKLAKGYYGARSRTYRVAVQAVTKAGQYAYRDRRQKKRQFRQLWIARINAAARQNGLSYSRFINGLKKASIEIDRKILADIAVFDKVVFATLVEKAKEALN</sequence>
<gene>
    <name evidence="1" type="primary">rplT</name>
    <name type="ordered locus">Sbal223_2187</name>
</gene>
<feature type="chain" id="PRO_1000193976" description="Large ribosomal subunit protein bL20">
    <location>
        <begin position="1"/>
        <end position="118"/>
    </location>
</feature>
<evidence type="ECO:0000255" key="1">
    <source>
        <dbReference type="HAMAP-Rule" id="MF_00382"/>
    </source>
</evidence>
<evidence type="ECO:0000305" key="2"/>
<dbReference type="EMBL" id="CP001252">
    <property type="protein sequence ID" value="ACK46687.1"/>
    <property type="molecule type" value="Genomic_DNA"/>
</dbReference>
<dbReference type="RefSeq" id="WP_006081652.1">
    <property type="nucleotide sequence ID" value="NC_011663.1"/>
</dbReference>
<dbReference type="SMR" id="B8EES9"/>
<dbReference type="GeneID" id="94727990"/>
<dbReference type="KEGG" id="sbp:Sbal223_2187"/>
<dbReference type="HOGENOM" id="CLU_123265_0_1_6"/>
<dbReference type="Proteomes" id="UP000002507">
    <property type="component" value="Chromosome"/>
</dbReference>
<dbReference type="GO" id="GO:1990904">
    <property type="term" value="C:ribonucleoprotein complex"/>
    <property type="evidence" value="ECO:0007669"/>
    <property type="project" value="UniProtKB-KW"/>
</dbReference>
<dbReference type="GO" id="GO:0005840">
    <property type="term" value="C:ribosome"/>
    <property type="evidence" value="ECO:0007669"/>
    <property type="project" value="UniProtKB-KW"/>
</dbReference>
<dbReference type="GO" id="GO:0019843">
    <property type="term" value="F:rRNA binding"/>
    <property type="evidence" value="ECO:0007669"/>
    <property type="project" value="UniProtKB-UniRule"/>
</dbReference>
<dbReference type="GO" id="GO:0003735">
    <property type="term" value="F:structural constituent of ribosome"/>
    <property type="evidence" value="ECO:0007669"/>
    <property type="project" value="InterPro"/>
</dbReference>
<dbReference type="GO" id="GO:0000027">
    <property type="term" value="P:ribosomal large subunit assembly"/>
    <property type="evidence" value="ECO:0007669"/>
    <property type="project" value="UniProtKB-UniRule"/>
</dbReference>
<dbReference type="GO" id="GO:0006412">
    <property type="term" value="P:translation"/>
    <property type="evidence" value="ECO:0007669"/>
    <property type="project" value="InterPro"/>
</dbReference>
<dbReference type="CDD" id="cd07026">
    <property type="entry name" value="Ribosomal_L20"/>
    <property type="match status" value="1"/>
</dbReference>
<dbReference type="FunFam" id="1.10.1900.20:FF:000001">
    <property type="entry name" value="50S ribosomal protein L20"/>
    <property type="match status" value="1"/>
</dbReference>
<dbReference type="Gene3D" id="6.10.160.10">
    <property type="match status" value="1"/>
</dbReference>
<dbReference type="Gene3D" id="1.10.1900.20">
    <property type="entry name" value="Ribosomal protein L20"/>
    <property type="match status" value="1"/>
</dbReference>
<dbReference type="HAMAP" id="MF_00382">
    <property type="entry name" value="Ribosomal_bL20"/>
    <property type="match status" value="1"/>
</dbReference>
<dbReference type="InterPro" id="IPR005813">
    <property type="entry name" value="Ribosomal_bL20"/>
</dbReference>
<dbReference type="InterPro" id="IPR049946">
    <property type="entry name" value="RIBOSOMAL_L20_CS"/>
</dbReference>
<dbReference type="InterPro" id="IPR035566">
    <property type="entry name" value="Ribosomal_protein_bL20_C"/>
</dbReference>
<dbReference type="NCBIfam" id="TIGR01032">
    <property type="entry name" value="rplT_bact"/>
    <property type="match status" value="1"/>
</dbReference>
<dbReference type="PANTHER" id="PTHR10986">
    <property type="entry name" value="39S RIBOSOMAL PROTEIN L20"/>
    <property type="match status" value="1"/>
</dbReference>
<dbReference type="Pfam" id="PF00453">
    <property type="entry name" value="Ribosomal_L20"/>
    <property type="match status" value="1"/>
</dbReference>
<dbReference type="PRINTS" id="PR00062">
    <property type="entry name" value="RIBOSOMALL20"/>
</dbReference>
<dbReference type="SUPFAM" id="SSF74731">
    <property type="entry name" value="Ribosomal protein L20"/>
    <property type="match status" value="1"/>
</dbReference>
<dbReference type="PROSITE" id="PS00937">
    <property type="entry name" value="RIBOSOMAL_L20"/>
    <property type="match status" value="1"/>
</dbReference>
<comment type="function">
    <text evidence="1">Binds directly to 23S ribosomal RNA and is necessary for the in vitro assembly process of the 50S ribosomal subunit. It is not involved in the protein synthesizing functions of that subunit.</text>
</comment>
<comment type="similarity">
    <text evidence="1">Belongs to the bacterial ribosomal protein bL20 family.</text>
</comment>
<reference key="1">
    <citation type="submission" date="2008-12" db="EMBL/GenBank/DDBJ databases">
        <title>Complete sequence of chromosome of Shewanella baltica OS223.</title>
        <authorList>
            <consortium name="US DOE Joint Genome Institute"/>
            <person name="Lucas S."/>
            <person name="Copeland A."/>
            <person name="Lapidus A."/>
            <person name="Glavina del Rio T."/>
            <person name="Dalin E."/>
            <person name="Tice H."/>
            <person name="Bruce D."/>
            <person name="Goodwin L."/>
            <person name="Pitluck S."/>
            <person name="Chertkov O."/>
            <person name="Meincke L."/>
            <person name="Brettin T."/>
            <person name="Detter J.C."/>
            <person name="Han C."/>
            <person name="Kuske C.R."/>
            <person name="Larimer F."/>
            <person name="Land M."/>
            <person name="Hauser L."/>
            <person name="Kyrpides N."/>
            <person name="Ovchinnikova G."/>
            <person name="Brettar I."/>
            <person name="Rodrigues J."/>
            <person name="Konstantinidis K."/>
            <person name="Tiedje J."/>
        </authorList>
    </citation>
    <scope>NUCLEOTIDE SEQUENCE [LARGE SCALE GENOMIC DNA]</scope>
    <source>
        <strain>OS223</strain>
    </source>
</reference>
<protein>
    <recommendedName>
        <fullName evidence="1">Large ribosomal subunit protein bL20</fullName>
    </recommendedName>
    <alternativeName>
        <fullName evidence="2">50S ribosomal protein L20</fullName>
    </alternativeName>
</protein>
<keyword id="KW-0687">Ribonucleoprotein</keyword>
<keyword id="KW-0689">Ribosomal protein</keyword>
<keyword id="KW-0694">RNA-binding</keyword>
<keyword id="KW-0699">rRNA-binding</keyword>
<accession>B8EES9</accession>
<proteinExistence type="inferred from homology"/>
<name>RL20_SHEB2</name>